<comment type="function">
    <text evidence="2">May function in EGF receptor signaling. May play a role in compound eye morphogenesis.</text>
</comment>
<comment type="tissue specificity">
    <text evidence="2">Expressed in the proliferative tissues of embryos and in the mitotically active tissue anterior to the morphogenetic furrow in eye imaginal disks.</text>
</comment>
<comment type="developmental stage">
    <text evidence="2">Expressed at higher levels during the embryonic and pupal stages of development. Expressed in proliferating tissues of the presumptive mesoderm in stage 7 gastrulating embryos. Expressed in the mesectoderm and anterior and posterior midgut primordia of stage 9 embryos. Also expressed in proliferating cells of the central nervous system during germ-band retraction.</text>
</comment>
<comment type="similarity">
    <text evidence="3">Belongs to the asteroid family.</text>
</comment>
<comment type="sequence caution" evidence="3">
    <conflict type="frameshift">
        <sequence resource="EMBL-CDS" id="AAC05483"/>
    </conflict>
</comment>
<feature type="chain" id="PRO_0000310462" description="Protein asteroid">
    <location>
        <begin position="1"/>
        <end position="854"/>
    </location>
</feature>
<feature type="region of interest" description="Disordered" evidence="1">
    <location>
        <begin position="368"/>
        <end position="427"/>
    </location>
</feature>
<feature type="compositionally biased region" description="Basic and acidic residues" evidence="1">
    <location>
        <begin position="375"/>
        <end position="387"/>
    </location>
</feature>
<feature type="compositionally biased region" description="Acidic residues" evidence="1">
    <location>
        <begin position="388"/>
        <end position="427"/>
    </location>
</feature>
<feature type="sequence conflict" description="In Ref. 5; AAC05483." evidence="3" ref="5">
    <original>A</original>
    <variation>G</variation>
    <location>
        <position position="263"/>
    </location>
</feature>
<feature type="sequence conflict" description="In Ref. 5; AAC05483." evidence="3" ref="5">
    <original>C</original>
    <variation>G</variation>
    <location>
        <position position="496"/>
    </location>
</feature>
<feature type="sequence conflict" description="In Ref. 5; AAC05483." evidence="3" ref="5">
    <original>I</original>
    <variation>M</variation>
    <location>
        <position position="509"/>
    </location>
</feature>
<feature type="sequence conflict" description="In Ref. 5; AAC05483." evidence="3" ref="5">
    <original>M</original>
    <variation>I</variation>
    <location>
        <position position="534"/>
    </location>
</feature>
<feature type="sequence conflict" description="In Ref. 5; AAC05483." evidence="3" ref="5">
    <original>E</original>
    <variation>V</variation>
    <location>
        <position position="568"/>
    </location>
</feature>
<feature type="sequence conflict" description="In Ref. 5; AAC05483." evidence="3" ref="5">
    <original>A</original>
    <variation>T</variation>
    <location>
        <position position="670"/>
    </location>
</feature>
<feature type="sequence conflict" description="In Ref. 3; AAK93494." evidence="3" ref="3">
    <original>T</original>
    <variation>R</variation>
    <location>
        <position position="798"/>
    </location>
</feature>
<feature type="sequence conflict" description="In Ref. 5; AAC05483." evidence="3" ref="5">
    <original>R</original>
    <variation>C</variation>
    <location>
        <position position="812"/>
    </location>
</feature>
<protein>
    <recommendedName>
        <fullName>Protein asteroid</fullName>
    </recommendedName>
</protein>
<sequence length="854" mass="98376">MGVRGLTSYIAQRAEIYLKPHELHSTALVIDGDNLSCNLYKDVTGSYSAFGGDYDDFYRAVVQFFQVLAECNIRPYVLMDGGYEERKLRTVSTRLRNKISVIKKINPNASITLFPLHLKEVFVDAVRDCGVPVMRCVFEADDELAALARKLNCPVLSYDSDFYIHNVKYIPLITLTVKVLTKQVKDKNSSNQKDSRDLRHCEAKNVKKRTRANKIVTGIQTTGLTASTKGSSKTYKYLDCCIYRVSHLCGRGTLSPEKLPLFAALLGNDYIARSAFKNFFAAGMGKAGRSRKLKLQQKRIQVILTWLKEETAESALAKVLSRLKKNQRDSLVSQVNAAISGYSNELCHAYDYFDEHYENAFPYIEPVSEEECSDDEHSSSSDEKFSDVEEGEDQEEADNQDEEQQEENQDVDSGDEEEEEADEGLELEVEDKTLLFPQWFLDKLYPAHLPRSFVDLMHLRKYINNPQIEHFPFHDSNEVALPILNYVFALLHHVECEKIELPLEVDMDIEGSTVPYLTYLTRALRVTNVRYFKMPIEKKPAYPFDPLSPDARHLRAVFEDNAPNADTEKLFSKLDQLPEDLRLYFLAIIYWLHRSEHCDLLHLHSLILSLVVLRTIDVTIPAEREVKTFLKRFGKTLKAERAVRDKEAAEGIKRGIKPALLELSVPDRMAHVPKSDCYLTQERLLPHFHMQEIFKKKFDLYSTTVIHAFAEFQAVVYQLNGLNSLLDFPLLSPRMNQLYCGAFLYNMYDVLRNRADVRYHVENFLLPDSKLMFDFYCYLYDWCAEFIPTWKRLEVDPTAAKALQKKRLKKQRQAARKVELREAIADPNAEMVEDADPENDFFDLNNKFCALKVA</sequence>
<reference key="1">
    <citation type="journal article" date="2000" name="Science">
        <title>The genome sequence of Drosophila melanogaster.</title>
        <authorList>
            <person name="Adams M.D."/>
            <person name="Celniker S.E."/>
            <person name="Holt R.A."/>
            <person name="Evans C.A."/>
            <person name="Gocayne J.D."/>
            <person name="Amanatides P.G."/>
            <person name="Scherer S.E."/>
            <person name="Li P.W."/>
            <person name="Hoskins R.A."/>
            <person name="Galle R.F."/>
            <person name="George R.A."/>
            <person name="Lewis S.E."/>
            <person name="Richards S."/>
            <person name="Ashburner M."/>
            <person name="Henderson S.N."/>
            <person name="Sutton G.G."/>
            <person name="Wortman J.R."/>
            <person name="Yandell M.D."/>
            <person name="Zhang Q."/>
            <person name="Chen L.X."/>
            <person name="Brandon R.C."/>
            <person name="Rogers Y.-H.C."/>
            <person name="Blazej R.G."/>
            <person name="Champe M."/>
            <person name="Pfeiffer B.D."/>
            <person name="Wan K.H."/>
            <person name="Doyle C."/>
            <person name="Baxter E.G."/>
            <person name="Helt G."/>
            <person name="Nelson C.R."/>
            <person name="Miklos G.L.G."/>
            <person name="Abril J.F."/>
            <person name="Agbayani A."/>
            <person name="An H.-J."/>
            <person name="Andrews-Pfannkoch C."/>
            <person name="Baldwin D."/>
            <person name="Ballew R.M."/>
            <person name="Basu A."/>
            <person name="Baxendale J."/>
            <person name="Bayraktaroglu L."/>
            <person name="Beasley E.M."/>
            <person name="Beeson K.Y."/>
            <person name="Benos P.V."/>
            <person name="Berman B.P."/>
            <person name="Bhandari D."/>
            <person name="Bolshakov S."/>
            <person name="Borkova D."/>
            <person name="Botchan M.R."/>
            <person name="Bouck J."/>
            <person name="Brokstein P."/>
            <person name="Brottier P."/>
            <person name="Burtis K.C."/>
            <person name="Busam D.A."/>
            <person name="Butler H."/>
            <person name="Cadieu E."/>
            <person name="Center A."/>
            <person name="Chandra I."/>
            <person name="Cherry J.M."/>
            <person name="Cawley S."/>
            <person name="Dahlke C."/>
            <person name="Davenport L.B."/>
            <person name="Davies P."/>
            <person name="de Pablos B."/>
            <person name="Delcher A."/>
            <person name="Deng Z."/>
            <person name="Mays A.D."/>
            <person name="Dew I."/>
            <person name="Dietz S.M."/>
            <person name="Dodson K."/>
            <person name="Doup L.E."/>
            <person name="Downes M."/>
            <person name="Dugan-Rocha S."/>
            <person name="Dunkov B.C."/>
            <person name="Dunn P."/>
            <person name="Durbin K.J."/>
            <person name="Evangelista C.C."/>
            <person name="Ferraz C."/>
            <person name="Ferriera S."/>
            <person name="Fleischmann W."/>
            <person name="Fosler C."/>
            <person name="Gabrielian A.E."/>
            <person name="Garg N.S."/>
            <person name="Gelbart W.M."/>
            <person name="Glasser K."/>
            <person name="Glodek A."/>
            <person name="Gong F."/>
            <person name="Gorrell J.H."/>
            <person name="Gu Z."/>
            <person name="Guan P."/>
            <person name="Harris M."/>
            <person name="Harris N.L."/>
            <person name="Harvey D.A."/>
            <person name="Heiman T.J."/>
            <person name="Hernandez J.R."/>
            <person name="Houck J."/>
            <person name="Hostin D."/>
            <person name="Houston K.A."/>
            <person name="Howland T.J."/>
            <person name="Wei M.-H."/>
            <person name="Ibegwam C."/>
            <person name="Jalali M."/>
            <person name="Kalush F."/>
            <person name="Karpen G.H."/>
            <person name="Ke Z."/>
            <person name="Kennison J.A."/>
            <person name="Ketchum K.A."/>
            <person name="Kimmel B.E."/>
            <person name="Kodira C.D."/>
            <person name="Kraft C.L."/>
            <person name="Kravitz S."/>
            <person name="Kulp D."/>
            <person name="Lai Z."/>
            <person name="Lasko P."/>
            <person name="Lei Y."/>
            <person name="Levitsky A.A."/>
            <person name="Li J.H."/>
            <person name="Li Z."/>
            <person name="Liang Y."/>
            <person name="Lin X."/>
            <person name="Liu X."/>
            <person name="Mattei B."/>
            <person name="McIntosh T.C."/>
            <person name="McLeod M.P."/>
            <person name="McPherson D."/>
            <person name="Merkulov G."/>
            <person name="Milshina N.V."/>
            <person name="Mobarry C."/>
            <person name="Morris J."/>
            <person name="Moshrefi A."/>
            <person name="Mount S.M."/>
            <person name="Moy M."/>
            <person name="Murphy B."/>
            <person name="Murphy L."/>
            <person name="Muzny D.M."/>
            <person name="Nelson D.L."/>
            <person name="Nelson D.R."/>
            <person name="Nelson K.A."/>
            <person name="Nixon K."/>
            <person name="Nusskern D.R."/>
            <person name="Pacleb J.M."/>
            <person name="Palazzolo M."/>
            <person name="Pittman G.S."/>
            <person name="Pan S."/>
            <person name="Pollard J."/>
            <person name="Puri V."/>
            <person name="Reese M.G."/>
            <person name="Reinert K."/>
            <person name="Remington K."/>
            <person name="Saunders R.D.C."/>
            <person name="Scheeler F."/>
            <person name="Shen H."/>
            <person name="Shue B.C."/>
            <person name="Siden-Kiamos I."/>
            <person name="Simpson M."/>
            <person name="Skupski M.P."/>
            <person name="Smith T.J."/>
            <person name="Spier E."/>
            <person name="Spradling A.C."/>
            <person name="Stapleton M."/>
            <person name="Strong R."/>
            <person name="Sun E."/>
            <person name="Svirskas R."/>
            <person name="Tector C."/>
            <person name="Turner R."/>
            <person name="Venter E."/>
            <person name="Wang A.H."/>
            <person name="Wang X."/>
            <person name="Wang Z.-Y."/>
            <person name="Wassarman D.A."/>
            <person name="Weinstock G.M."/>
            <person name="Weissenbach J."/>
            <person name="Williams S.M."/>
            <person name="Woodage T."/>
            <person name="Worley K.C."/>
            <person name="Wu D."/>
            <person name="Yang S."/>
            <person name="Yao Q.A."/>
            <person name="Ye J."/>
            <person name="Yeh R.-F."/>
            <person name="Zaveri J.S."/>
            <person name="Zhan M."/>
            <person name="Zhang G."/>
            <person name="Zhao Q."/>
            <person name="Zheng L."/>
            <person name="Zheng X.H."/>
            <person name="Zhong F.N."/>
            <person name="Zhong W."/>
            <person name="Zhou X."/>
            <person name="Zhu S.C."/>
            <person name="Zhu X."/>
            <person name="Smith H.O."/>
            <person name="Gibbs R.A."/>
            <person name="Myers E.W."/>
            <person name="Rubin G.M."/>
            <person name="Venter J.C."/>
        </authorList>
    </citation>
    <scope>NUCLEOTIDE SEQUENCE [LARGE SCALE GENOMIC DNA]</scope>
    <source>
        <strain>Berkeley</strain>
    </source>
</reference>
<reference key="2">
    <citation type="journal article" date="2002" name="Genome Biol.">
        <title>Annotation of the Drosophila melanogaster euchromatic genome: a systematic review.</title>
        <authorList>
            <person name="Misra S."/>
            <person name="Crosby M.A."/>
            <person name="Mungall C.J."/>
            <person name="Matthews B.B."/>
            <person name="Campbell K.S."/>
            <person name="Hradecky P."/>
            <person name="Huang Y."/>
            <person name="Kaminker J.S."/>
            <person name="Millburn G.H."/>
            <person name="Prochnik S.E."/>
            <person name="Smith C.D."/>
            <person name="Tupy J.L."/>
            <person name="Whitfield E.J."/>
            <person name="Bayraktaroglu L."/>
            <person name="Berman B.P."/>
            <person name="Bettencourt B.R."/>
            <person name="Celniker S.E."/>
            <person name="de Grey A.D.N.J."/>
            <person name="Drysdale R.A."/>
            <person name="Harris N.L."/>
            <person name="Richter J."/>
            <person name="Russo S."/>
            <person name="Schroeder A.J."/>
            <person name="Shu S.Q."/>
            <person name="Stapleton M."/>
            <person name="Yamada C."/>
            <person name="Ashburner M."/>
            <person name="Gelbart W.M."/>
            <person name="Rubin G.M."/>
            <person name="Lewis S.E."/>
        </authorList>
    </citation>
    <scope>GENOME REANNOTATION</scope>
    <source>
        <strain>Berkeley</strain>
    </source>
</reference>
<reference key="3">
    <citation type="journal article" date="2002" name="Genome Biol.">
        <title>A Drosophila full-length cDNA resource.</title>
        <authorList>
            <person name="Stapleton M."/>
            <person name="Carlson J.W."/>
            <person name="Brokstein P."/>
            <person name="Yu C."/>
            <person name="Champe M."/>
            <person name="George R.A."/>
            <person name="Guarin H."/>
            <person name="Kronmiller B."/>
            <person name="Pacleb J.M."/>
            <person name="Park S."/>
            <person name="Wan K.H."/>
            <person name="Rubin G.M."/>
            <person name="Celniker S.E."/>
        </authorList>
    </citation>
    <scope>NUCLEOTIDE SEQUENCE [LARGE SCALE MRNA]</scope>
    <source>
        <strain>Berkeley</strain>
        <tissue>Embryo</tissue>
    </source>
</reference>
<reference key="4">
    <citation type="submission" date="2008-09" db="EMBL/GenBank/DDBJ databases">
        <authorList>
            <person name="Carlson J.W."/>
            <person name="Booth B."/>
            <person name="Frise E."/>
            <person name="Park S."/>
            <person name="Wan K.H."/>
            <person name="Yu C."/>
            <person name="Celniker S.E."/>
        </authorList>
    </citation>
    <scope>NUCLEOTIDE SEQUENCE [LARGE SCALE MRNA]</scope>
    <source>
        <strain>Berkeley</strain>
    </source>
</reference>
<reference key="5">
    <citation type="journal article" date="1998" name="Genome">
        <title>The Drosophila gene asteroid encodes a novel protein and displays dosage-sensitive interactions with Star and Egfr.</title>
        <authorList>
            <person name="Kotarski M.A."/>
            <person name="Leonard D.A."/>
            <person name="Bennett S.A."/>
            <person name="Bishop C.P."/>
            <person name="Wahn S.D."/>
            <person name="Sedore S.A."/>
            <person name="Shrader M."/>
        </authorList>
    </citation>
    <scope>NUCLEOTIDE SEQUENCE [GENOMIC DNA] OF 1-815</scope>
    <scope>FUNCTION</scope>
    <scope>TISSUE SPECIFICITY</scope>
    <scope>DEVELOPMENTAL STAGE</scope>
</reference>
<proteinExistence type="evidence at transcript level"/>
<dbReference type="EMBL" id="AE014134">
    <property type="protein sequence ID" value="AAF51424.1"/>
    <property type="molecule type" value="Genomic_DNA"/>
</dbReference>
<dbReference type="EMBL" id="AY052070">
    <property type="protein sequence ID" value="AAK93494.1"/>
    <property type="molecule type" value="mRNA"/>
</dbReference>
<dbReference type="EMBL" id="BT044345">
    <property type="protein sequence ID" value="ACH92410.1"/>
    <property type="molecule type" value="mRNA"/>
</dbReference>
<dbReference type="EMBL" id="AF047010">
    <property type="protein sequence ID" value="AAC05483.1"/>
    <property type="status" value="ALT_FRAME"/>
    <property type="molecule type" value="Genomic_DNA"/>
</dbReference>
<dbReference type="RefSeq" id="NP_523451.2">
    <property type="nucleotide sequence ID" value="NM_078727.3"/>
</dbReference>
<dbReference type="BioGRID" id="59535">
    <property type="interactions" value="6"/>
</dbReference>
<dbReference type="FunCoup" id="Q9VPW1">
    <property type="interactions" value="672"/>
</dbReference>
<dbReference type="IntAct" id="Q9VPW1">
    <property type="interactions" value="7"/>
</dbReference>
<dbReference type="STRING" id="7227.FBpp0077617"/>
<dbReference type="GlyGen" id="Q9VPW1">
    <property type="glycosylation" value="1 site"/>
</dbReference>
<dbReference type="PaxDb" id="7227-FBpp0077617"/>
<dbReference type="DNASU" id="33282"/>
<dbReference type="EnsemblMetazoa" id="FBtr0077952">
    <property type="protein sequence ID" value="FBpp0077617"/>
    <property type="gene ID" value="FBgn0015905"/>
</dbReference>
<dbReference type="GeneID" id="33282"/>
<dbReference type="KEGG" id="dme:Dmel_CG4426"/>
<dbReference type="UCSC" id="CG4426-RA">
    <property type="organism name" value="d. melanogaster"/>
</dbReference>
<dbReference type="AGR" id="FB:FBgn0015905"/>
<dbReference type="CTD" id="33282"/>
<dbReference type="FlyBase" id="FBgn0015905">
    <property type="gene designation" value="ast"/>
</dbReference>
<dbReference type="VEuPathDB" id="VectorBase:FBgn0015905"/>
<dbReference type="eggNOG" id="ENOG502QQRA">
    <property type="taxonomic scope" value="Eukaryota"/>
</dbReference>
<dbReference type="GeneTree" id="ENSGT00390000010145"/>
<dbReference type="HOGENOM" id="CLU_017330_0_0_1"/>
<dbReference type="InParanoid" id="Q9VPW1"/>
<dbReference type="OMA" id="VMRCVFE"/>
<dbReference type="OrthoDB" id="25987at2759"/>
<dbReference type="PhylomeDB" id="Q9VPW1"/>
<dbReference type="BioGRID-ORCS" id="33282">
    <property type="hits" value="0 hits in 1 CRISPR screen"/>
</dbReference>
<dbReference type="GenomeRNAi" id="33282"/>
<dbReference type="PRO" id="PR:Q9VPW1"/>
<dbReference type="Proteomes" id="UP000000803">
    <property type="component" value="Chromosome 2L"/>
</dbReference>
<dbReference type="Bgee" id="FBgn0015905">
    <property type="expression patterns" value="Expressed in adult enteroendocrine precursor cell in adult midgut (Drosophila) and 40 other cell types or tissues"/>
</dbReference>
<dbReference type="GO" id="GO:0001745">
    <property type="term" value="P:compound eye morphogenesis"/>
    <property type="evidence" value="ECO:0000315"/>
    <property type="project" value="FlyBase"/>
</dbReference>
<dbReference type="GO" id="GO:0001752">
    <property type="term" value="P:compound eye photoreceptor fate commitment"/>
    <property type="evidence" value="ECO:0000315"/>
    <property type="project" value="UniProtKB"/>
</dbReference>
<dbReference type="GO" id="GO:0007476">
    <property type="term" value="P:imaginal disc-derived wing morphogenesis"/>
    <property type="evidence" value="ECO:0000315"/>
    <property type="project" value="FlyBase"/>
</dbReference>
<dbReference type="GO" id="GO:0008586">
    <property type="term" value="P:imaginal disc-derived wing vein morphogenesis"/>
    <property type="evidence" value="ECO:0000315"/>
    <property type="project" value="FlyBase"/>
</dbReference>
<dbReference type="GO" id="GO:0007526">
    <property type="term" value="P:larval somatic muscle development"/>
    <property type="evidence" value="ECO:0000315"/>
    <property type="project" value="FlyBase"/>
</dbReference>
<dbReference type="CDD" id="cd18676">
    <property type="entry name" value="PIN_asteroid-like"/>
    <property type="match status" value="1"/>
</dbReference>
<dbReference type="FunFam" id="3.40.50.1010:FF:000174">
    <property type="match status" value="1"/>
</dbReference>
<dbReference type="Gene3D" id="3.40.50.1010">
    <property type="entry name" value="5'-nuclease"/>
    <property type="match status" value="1"/>
</dbReference>
<dbReference type="InterPro" id="IPR026832">
    <property type="entry name" value="Asteroid"/>
</dbReference>
<dbReference type="InterPro" id="IPR029060">
    <property type="entry name" value="PIN-like_dom_sf"/>
</dbReference>
<dbReference type="PANTHER" id="PTHR15665">
    <property type="entry name" value="ASTEROID PROTEIN"/>
    <property type="match status" value="1"/>
</dbReference>
<dbReference type="PANTHER" id="PTHR15665:SF1">
    <property type="entry name" value="PROTEIN ASTEROID HOMOLOG 1"/>
    <property type="match status" value="1"/>
</dbReference>
<dbReference type="SUPFAM" id="SSF88723">
    <property type="entry name" value="PIN domain-like"/>
    <property type="match status" value="1"/>
</dbReference>
<organism>
    <name type="scientific">Drosophila melanogaster</name>
    <name type="common">Fruit fly</name>
    <dbReference type="NCBI Taxonomy" id="7227"/>
    <lineage>
        <taxon>Eukaryota</taxon>
        <taxon>Metazoa</taxon>
        <taxon>Ecdysozoa</taxon>
        <taxon>Arthropoda</taxon>
        <taxon>Hexapoda</taxon>
        <taxon>Insecta</taxon>
        <taxon>Pterygota</taxon>
        <taxon>Neoptera</taxon>
        <taxon>Endopterygota</taxon>
        <taxon>Diptera</taxon>
        <taxon>Brachycera</taxon>
        <taxon>Muscomorpha</taxon>
        <taxon>Ephydroidea</taxon>
        <taxon>Drosophilidae</taxon>
        <taxon>Drosophila</taxon>
        <taxon>Sophophora</taxon>
    </lineage>
</organism>
<name>ASTE_DROME</name>
<evidence type="ECO:0000256" key="1">
    <source>
        <dbReference type="SAM" id="MobiDB-lite"/>
    </source>
</evidence>
<evidence type="ECO:0000269" key="2">
    <source>
    </source>
</evidence>
<evidence type="ECO:0000305" key="3"/>
<gene>
    <name type="primary">ast</name>
    <name type="ORF">CG4426</name>
</gene>
<keyword id="KW-0217">Developmental protein</keyword>
<keyword id="KW-1185">Reference proteome</keyword>
<accession>Q9VPW1</accession>
<accession>B5RJ71</accession>
<accession>O61517</accession>
<accession>Q960G8</accession>